<evidence type="ECO:0000250" key="1">
    <source>
        <dbReference type="UniProtKB" id="P08067"/>
    </source>
</evidence>
<evidence type="ECO:0000255" key="2"/>
<evidence type="ECO:0000255" key="3">
    <source>
        <dbReference type="PROSITE-ProRule" id="PRU00628"/>
    </source>
</evidence>
<evidence type="ECO:0000256" key="4">
    <source>
        <dbReference type="SAM" id="MobiDB-lite"/>
    </source>
</evidence>
<evidence type="ECO:0000305" key="5"/>
<comment type="function">
    <text evidence="1">Component of the ubiquinol-cytochrome c oxidoreductase, a multisubunit transmembrane complex that is part of the mitochondrial electron transport chain which drives oxidative phosphorylation. The respiratory chain contains 3 multisubunit complexes succinate dehydrogenase (complex II, CII), ubiquinol-cytochrome c oxidoreductase (cytochrome b-c1 complex, complex III, CIII) and cytochrome c oxidase (complex IV, CIV), that cooperate to transfer electrons derived from NADH and succinate to molecular oxygen, creating an electrochemical gradient over the inner membrane that drives transmembrane transport and the ATP synthase. The cytochrome b-c1 complex catalyzes electron transfer from ubiquinol to cytochrome c, linking this redox reaction to translocation of protons across the mitochondrial inner membrane, with protons being carried across the membrane as hydrogens on the quinol. In the process called Q cycle, 2 protons are consumed from the matrix, 4 protons are released into the intermembrane space and 2 electrons are passed to cytochrome c. The Rieske protein is a catalytic core subunit containing a [2Fe-2S] iron-sulfur cluster. It cycles between 2 conformational states during catalysis to transfer electrons from the quinol bound in the Q(0) site in cytochrome b to cytochrome c1.</text>
</comment>
<comment type="catalytic activity">
    <reaction evidence="1">
        <text>a quinol + 2 Fe(III)-[cytochrome c](out) = a quinone + 2 Fe(II)-[cytochrome c](out) + 2 H(+)(out)</text>
        <dbReference type="Rhea" id="RHEA:11484"/>
        <dbReference type="Rhea" id="RHEA-COMP:10350"/>
        <dbReference type="Rhea" id="RHEA-COMP:14399"/>
        <dbReference type="ChEBI" id="CHEBI:15378"/>
        <dbReference type="ChEBI" id="CHEBI:24646"/>
        <dbReference type="ChEBI" id="CHEBI:29033"/>
        <dbReference type="ChEBI" id="CHEBI:29034"/>
        <dbReference type="ChEBI" id="CHEBI:132124"/>
        <dbReference type="EC" id="7.1.1.8"/>
    </reaction>
</comment>
<comment type="cofactor">
    <cofactor evidence="3">
        <name>[2Fe-2S] cluster</name>
        <dbReference type="ChEBI" id="CHEBI:190135"/>
    </cofactor>
    <text evidence="3">Binds 1 [2Fe-2S] cluster per subunit.</text>
</comment>
<comment type="subunit">
    <text evidence="1">Component of the ubiquinol-cytochrome c oxidoreductase (cytochrome b-c1 complex, complex III, CIII), a multisubunit enzyme composed of 3 respiratory subunits cytochrome b, cytochrome c1 and Rieske protein, 2 core protein subunits, and several low-molecular weight protein subunits. The complex exists as an obligatory dimer and forms supercomplexes (SCs) in the inner mitochondrial membrane with cytochrome c oxidase (complex IV, CIV).</text>
</comment>
<comment type="subcellular location">
    <subcellularLocation>
        <location evidence="1">Mitochondrion inner membrane</location>
        <topology evidence="1">Single-pass membrane protein</topology>
    </subcellularLocation>
</comment>
<comment type="miscellaneous">
    <text>The Rieske protein is a high potential 2Fe-2S protein.</text>
</comment>
<comment type="similarity">
    <text evidence="5">Belongs to the Rieske iron-sulfur protein family.</text>
</comment>
<organism>
    <name type="scientific">Zea mays</name>
    <name type="common">Maize</name>
    <dbReference type="NCBI Taxonomy" id="4577"/>
    <lineage>
        <taxon>Eukaryota</taxon>
        <taxon>Viridiplantae</taxon>
        <taxon>Streptophyta</taxon>
        <taxon>Embryophyta</taxon>
        <taxon>Tracheophyta</taxon>
        <taxon>Spermatophyta</taxon>
        <taxon>Magnoliopsida</taxon>
        <taxon>Liliopsida</taxon>
        <taxon>Poales</taxon>
        <taxon>Poaceae</taxon>
        <taxon>PACMAD clade</taxon>
        <taxon>Panicoideae</taxon>
        <taxon>Andropogonodae</taxon>
        <taxon>Andropogoneae</taxon>
        <taxon>Tripsacinae</taxon>
        <taxon>Zea</taxon>
    </lineage>
</organism>
<dbReference type="EC" id="7.1.1.8"/>
<dbReference type="EMBL" id="M77224">
    <property type="protein sequence ID" value="AAA33507.1"/>
    <property type="molecule type" value="mRNA"/>
</dbReference>
<dbReference type="PIR" id="A41607">
    <property type="entry name" value="A41607"/>
</dbReference>
<dbReference type="RefSeq" id="NP_001105561.1">
    <property type="nucleotide sequence ID" value="NM_001112091.1"/>
</dbReference>
<dbReference type="SMR" id="P49727"/>
<dbReference type="FunCoup" id="P49727">
    <property type="interactions" value="3176"/>
</dbReference>
<dbReference type="STRING" id="4577.P49727"/>
<dbReference type="PaxDb" id="4577-GRMZM2G023194_P01"/>
<dbReference type="MaizeGDB" id="30151"/>
<dbReference type="eggNOG" id="KOG1671">
    <property type="taxonomic scope" value="Eukaryota"/>
</dbReference>
<dbReference type="InParanoid" id="P49727"/>
<dbReference type="Proteomes" id="UP000007305">
    <property type="component" value="Unplaced"/>
</dbReference>
<dbReference type="ExpressionAtlas" id="P49727">
    <property type="expression patterns" value="baseline and differential"/>
</dbReference>
<dbReference type="GO" id="GO:0005743">
    <property type="term" value="C:mitochondrial inner membrane"/>
    <property type="evidence" value="ECO:0007669"/>
    <property type="project" value="UniProtKB-SubCell"/>
</dbReference>
<dbReference type="GO" id="GO:0005739">
    <property type="term" value="C:mitochondrion"/>
    <property type="evidence" value="ECO:0000314"/>
    <property type="project" value="AgBase"/>
</dbReference>
<dbReference type="GO" id="GO:0045275">
    <property type="term" value="C:respiratory chain complex III"/>
    <property type="evidence" value="ECO:0000318"/>
    <property type="project" value="GO_Central"/>
</dbReference>
<dbReference type="GO" id="GO:0051537">
    <property type="term" value="F:2 iron, 2 sulfur cluster binding"/>
    <property type="evidence" value="ECO:0007669"/>
    <property type="project" value="UniProtKB-KW"/>
</dbReference>
<dbReference type="GO" id="GO:0046872">
    <property type="term" value="F:metal ion binding"/>
    <property type="evidence" value="ECO:0007669"/>
    <property type="project" value="UniProtKB-KW"/>
</dbReference>
<dbReference type="GO" id="GO:0016491">
    <property type="term" value="F:oxidoreductase activity"/>
    <property type="evidence" value="ECO:0000318"/>
    <property type="project" value="GO_Central"/>
</dbReference>
<dbReference type="GO" id="GO:0008121">
    <property type="term" value="F:ubiquinol-cytochrome-c reductase activity"/>
    <property type="evidence" value="ECO:0000316"/>
    <property type="project" value="AgBase"/>
</dbReference>
<dbReference type="GO" id="GO:0009060">
    <property type="term" value="P:aerobic respiration"/>
    <property type="evidence" value="ECO:0000316"/>
    <property type="project" value="AgBase"/>
</dbReference>
<dbReference type="GO" id="GO:0006122">
    <property type="term" value="P:mitochondrial electron transport, ubiquinol to cytochrome c"/>
    <property type="evidence" value="ECO:0000318"/>
    <property type="project" value="GO_Central"/>
</dbReference>
<dbReference type="GO" id="GO:0009408">
    <property type="term" value="P:response to heat"/>
    <property type="evidence" value="ECO:0000316"/>
    <property type="project" value="AgBase"/>
</dbReference>
<dbReference type="CDD" id="cd03470">
    <property type="entry name" value="Rieske_cytochrome_bc1"/>
    <property type="match status" value="1"/>
</dbReference>
<dbReference type="FunFam" id="2.102.10.10:FF:000001">
    <property type="entry name" value="Cytochrome b-c1 complex subunit Rieske, mitochondrial"/>
    <property type="match status" value="1"/>
</dbReference>
<dbReference type="Gene3D" id="2.102.10.10">
    <property type="entry name" value="Rieske [2Fe-2S] iron-sulphur domain"/>
    <property type="match status" value="1"/>
</dbReference>
<dbReference type="InterPro" id="IPR017941">
    <property type="entry name" value="Rieske_2Fe-2S"/>
</dbReference>
<dbReference type="InterPro" id="IPR036922">
    <property type="entry name" value="Rieske_2Fe-2S_sf"/>
</dbReference>
<dbReference type="InterPro" id="IPR014349">
    <property type="entry name" value="Rieske_Fe-S_prot"/>
</dbReference>
<dbReference type="InterPro" id="IPR005805">
    <property type="entry name" value="Rieske_Fe-S_prot_C"/>
</dbReference>
<dbReference type="InterPro" id="IPR004192">
    <property type="entry name" value="Rieske_TM"/>
</dbReference>
<dbReference type="InterPro" id="IPR006317">
    <property type="entry name" value="Ubiquinol_cyt_c_Rdtase_Fe-S-su"/>
</dbReference>
<dbReference type="NCBIfam" id="TIGR01416">
    <property type="entry name" value="Rieske_proteo"/>
    <property type="match status" value="1"/>
</dbReference>
<dbReference type="PANTHER" id="PTHR10134">
    <property type="entry name" value="CYTOCHROME B-C1 COMPLEX SUBUNIT RIESKE, MITOCHONDRIAL"/>
    <property type="match status" value="1"/>
</dbReference>
<dbReference type="Pfam" id="PF00355">
    <property type="entry name" value="Rieske"/>
    <property type="match status" value="1"/>
</dbReference>
<dbReference type="Pfam" id="PF02921">
    <property type="entry name" value="UCR_TM"/>
    <property type="match status" value="1"/>
</dbReference>
<dbReference type="PRINTS" id="PR00162">
    <property type="entry name" value="RIESKE"/>
</dbReference>
<dbReference type="SUPFAM" id="SSF50022">
    <property type="entry name" value="ISP domain"/>
    <property type="match status" value="1"/>
</dbReference>
<dbReference type="SUPFAM" id="SSF81502">
    <property type="entry name" value="ISP transmembrane anchor"/>
    <property type="match status" value="1"/>
</dbReference>
<dbReference type="PROSITE" id="PS51296">
    <property type="entry name" value="RIESKE"/>
    <property type="match status" value="1"/>
</dbReference>
<keyword id="KW-0001">2Fe-2S</keyword>
<keyword id="KW-1015">Disulfide bond</keyword>
<keyword id="KW-0249">Electron transport</keyword>
<keyword id="KW-0408">Iron</keyword>
<keyword id="KW-0411">Iron-sulfur</keyword>
<keyword id="KW-0472">Membrane</keyword>
<keyword id="KW-0479">Metal-binding</keyword>
<keyword id="KW-0496">Mitochondrion</keyword>
<keyword id="KW-0999">Mitochondrion inner membrane</keyword>
<keyword id="KW-1185">Reference proteome</keyword>
<keyword id="KW-0679">Respiratory chain</keyword>
<keyword id="KW-0809">Transit peptide</keyword>
<keyword id="KW-1278">Translocase</keyword>
<keyword id="KW-0812">Transmembrane</keyword>
<keyword id="KW-1133">Transmembrane helix</keyword>
<keyword id="KW-0813">Transport</keyword>
<sequence>MLRVAGRRLSSSLSWRPAAAVARGPLAGAGVPDRDDDSARGRSQPRFSIDSPFFVASRGFSSTETVVPRNQDAGLADLPATVAAVKNPNPKVVYDEYNHERYPPGDPSKRAFAYFVLSGGRFIYASLLRLLVLKFVLSMSASKDVLALASLEVDLSSIEPGTTVTVKWRGKPVFIRRRTEDDIKLANSVDVASLRHPEQDAERVKNPEWLVVIGVCTHLGCIPLPNAGDFGGWFCPCHGSHYDISGRIRKGPAPFNLEVPTYSFLEENKLLVG</sequence>
<proteinExistence type="evidence at transcript level"/>
<accession>P49727</accession>
<name>UCRI_MAIZE</name>
<protein>
    <recommendedName>
        <fullName>Cytochrome b-c1 complex subunit Rieske, mitochondrial</fullName>
        <ecNumber>7.1.1.8</ecNumber>
    </recommendedName>
    <alternativeName>
        <fullName>Complex III subunit 5</fullName>
    </alternativeName>
    <alternativeName>
        <fullName>Rieske iron-sulfur protein</fullName>
        <shortName>RISP</shortName>
    </alternativeName>
    <alternativeName>
        <fullName>Ubiquinol-cytochrome c reductase iron-sulfur subunit</fullName>
    </alternativeName>
</protein>
<feature type="transit peptide" description="Mitochondrion" evidence="2">
    <location>
        <begin position="1"/>
        <end position="61"/>
    </location>
</feature>
<feature type="chain" id="PRO_0000030674" description="Cytochrome b-c1 complex subunit Rieske, mitochondrial">
    <location>
        <begin position="62"/>
        <end position="273"/>
    </location>
</feature>
<feature type="topological domain" description="Mitochondrial matrix" evidence="5">
    <location>
        <begin position="62"/>
        <end position="110"/>
    </location>
</feature>
<feature type="transmembrane region" description="Helical" evidence="2">
    <location>
        <begin position="111"/>
        <end position="133"/>
    </location>
</feature>
<feature type="topological domain" description="Mitochondrial intermembrane" evidence="5">
    <location>
        <begin position="134"/>
        <end position="273"/>
    </location>
</feature>
<feature type="domain" description="Rieske" evidence="3">
    <location>
        <begin position="176"/>
        <end position="271"/>
    </location>
</feature>
<feature type="region of interest" description="Disordered" evidence="4">
    <location>
        <begin position="25"/>
        <end position="46"/>
    </location>
</feature>
<feature type="binding site" evidence="3">
    <location>
        <position position="216"/>
    </location>
    <ligand>
        <name>[2Fe-2S] cluster</name>
        <dbReference type="ChEBI" id="CHEBI:190135"/>
    </ligand>
</feature>
<feature type="binding site" evidence="3">
    <location>
        <position position="218"/>
    </location>
    <ligand>
        <name>[2Fe-2S] cluster</name>
        <dbReference type="ChEBI" id="CHEBI:190135"/>
    </ligand>
</feature>
<feature type="binding site" evidence="3">
    <location>
        <position position="235"/>
    </location>
    <ligand>
        <name>[2Fe-2S] cluster</name>
        <dbReference type="ChEBI" id="CHEBI:190135"/>
    </ligand>
</feature>
<feature type="binding site" evidence="3">
    <location>
        <position position="238"/>
    </location>
    <ligand>
        <name>[2Fe-2S] cluster</name>
        <dbReference type="ChEBI" id="CHEBI:190135"/>
    </ligand>
</feature>
<feature type="disulfide bond" evidence="3">
    <location>
        <begin position="221"/>
        <end position="237"/>
    </location>
</feature>
<reference key="1">
    <citation type="journal article" date="1991" name="Proc. Natl. Acad. Sci. U.S.A.">
        <title>Functional analysis in yeast of cDNA coding for the mitochondrial Rieske iron-sulfur protein of higher plants.</title>
        <authorList>
            <person name="Huang J.T."/>
            <person name="Struck F."/>
            <person name="Matzinger D.F."/>
            <person name="Levings C.S. III"/>
        </authorList>
    </citation>
    <scope>NUCLEOTIDE SEQUENCE [MRNA]</scope>
</reference>